<protein>
    <recommendedName>
        <fullName evidence="1">ATP synthase gamma chain</fullName>
    </recommendedName>
    <alternativeName>
        <fullName evidence="1">ATP synthase F1 sector gamma subunit</fullName>
    </alternativeName>
    <alternativeName>
        <fullName evidence="1">F-ATPase gamma subunit</fullName>
    </alternativeName>
</protein>
<dbReference type="EMBL" id="CP000724">
    <property type="protein sequence ID" value="ABR46582.1"/>
    <property type="molecule type" value="Genomic_DNA"/>
</dbReference>
<dbReference type="RefSeq" id="WP_011971490.1">
    <property type="nucleotide sequence ID" value="NC_009633.1"/>
</dbReference>
<dbReference type="SMR" id="A6TK64"/>
<dbReference type="STRING" id="293826.Amet_0352"/>
<dbReference type="KEGG" id="amt:Amet_0352"/>
<dbReference type="eggNOG" id="COG0224">
    <property type="taxonomic scope" value="Bacteria"/>
</dbReference>
<dbReference type="HOGENOM" id="CLU_050669_0_1_9"/>
<dbReference type="OrthoDB" id="9812769at2"/>
<dbReference type="Proteomes" id="UP000001572">
    <property type="component" value="Chromosome"/>
</dbReference>
<dbReference type="GO" id="GO:0005886">
    <property type="term" value="C:plasma membrane"/>
    <property type="evidence" value="ECO:0007669"/>
    <property type="project" value="UniProtKB-SubCell"/>
</dbReference>
<dbReference type="GO" id="GO:0045259">
    <property type="term" value="C:proton-transporting ATP synthase complex"/>
    <property type="evidence" value="ECO:0007669"/>
    <property type="project" value="UniProtKB-KW"/>
</dbReference>
<dbReference type="GO" id="GO:0005524">
    <property type="term" value="F:ATP binding"/>
    <property type="evidence" value="ECO:0007669"/>
    <property type="project" value="UniProtKB-UniRule"/>
</dbReference>
<dbReference type="GO" id="GO:0046933">
    <property type="term" value="F:proton-transporting ATP synthase activity, rotational mechanism"/>
    <property type="evidence" value="ECO:0007669"/>
    <property type="project" value="UniProtKB-UniRule"/>
</dbReference>
<dbReference type="GO" id="GO:0042777">
    <property type="term" value="P:proton motive force-driven plasma membrane ATP synthesis"/>
    <property type="evidence" value="ECO:0007669"/>
    <property type="project" value="UniProtKB-UniRule"/>
</dbReference>
<dbReference type="CDD" id="cd12151">
    <property type="entry name" value="F1-ATPase_gamma"/>
    <property type="match status" value="1"/>
</dbReference>
<dbReference type="Gene3D" id="3.40.1380.10">
    <property type="match status" value="1"/>
</dbReference>
<dbReference type="Gene3D" id="1.10.287.80">
    <property type="entry name" value="ATP synthase, gamma subunit, helix hairpin domain"/>
    <property type="match status" value="1"/>
</dbReference>
<dbReference type="HAMAP" id="MF_00815">
    <property type="entry name" value="ATP_synth_gamma_bact"/>
    <property type="match status" value="1"/>
</dbReference>
<dbReference type="InterPro" id="IPR035968">
    <property type="entry name" value="ATP_synth_F1_ATPase_gsu"/>
</dbReference>
<dbReference type="InterPro" id="IPR000131">
    <property type="entry name" value="ATP_synth_F1_gsu"/>
</dbReference>
<dbReference type="InterPro" id="IPR023632">
    <property type="entry name" value="ATP_synth_F1_gsu_CS"/>
</dbReference>
<dbReference type="NCBIfam" id="TIGR01146">
    <property type="entry name" value="ATPsyn_F1gamma"/>
    <property type="match status" value="1"/>
</dbReference>
<dbReference type="PANTHER" id="PTHR11693">
    <property type="entry name" value="ATP SYNTHASE GAMMA CHAIN"/>
    <property type="match status" value="1"/>
</dbReference>
<dbReference type="PANTHER" id="PTHR11693:SF22">
    <property type="entry name" value="ATP SYNTHASE SUBUNIT GAMMA, MITOCHONDRIAL"/>
    <property type="match status" value="1"/>
</dbReference>
<dbReference type="Pfam" id="PF00231">
    <property type="entry name" value="ATP-synt"/>
    <property type="match status" value="1"/>
</dbReference>
<dbReference type="PRINTS" id="PR00126">
    <property type="entry name" value="ATPASEGAMMA"/>
</dbReference>
<dbReference type="SUPFAM" id="SSF52943">
    <property type="entry name" value="ATP synthase (F1-ATPase), gamma subunit"/>
    <property type="match status" value="1"/>
</dbReference>
<dbReference type="PROSITE" id="PS00153">
    <property type="entry name" value="ATPASE_GAMMA"/>
    <property type="match status" value="1"/>
</dbReference>
<name>ATPG_ALKMQ</name>
<accession>A6TK64</accession>
<keyword id="KW-0066">ATP synthesis</keyword>
<keyword id="KW-1003">Cell membrane</keyword>
<keyword id="KW-0139">CF(1)</keyword>
<keyword id="KW-0375">Hydrogen ion transport</keyword>
<keyword id="KW-0406">Ion transport</keyword>
<keyword id="KW-0472">Membrane</keyword>
<keyword id="KW-1185">Reference proteome</keyword>
<keyword id="KW-0813">Transport</keyword>
<organism>
    <name type="scientific">Alkaliphilus metalliredigens (strain QYMF)</name>
    <dbReference type="NCBI Taxonomy" id="293826"/>
    <lineage>
        <taxon>Bacteria</taxon>
        <taxon>Bacillati</taxon>
        <taxon>Bacillota</taxon>
        <taxon>Clostridia</taxon>
        <taxon>Peptostreptococcales</taxon>
        <taxon>Natronincolaceae</taxon>
        <taxon>Alkaliphilus</taxon>
    </lineage>
</organism>
<feature type="chain" id="PRO_1000072857" description="ATP synthase gamma chain">
    <location>
        <begin position="1"/>
        <end position="289"/>
    </location>
</feature>
<proteinExistence type="inferred from homology"/>
<evidence type="ECO:0000255" key="1">
    <source>
        <dbReference type="HAMAP-Rule" id="MF_00815"/>
    </source>
</evidence>
<gene>
    <name evidence="1" type="primary">atpG</name>
    <name type="ordered locus">Amet_0352</name>
</gene>
<reference key="1">
    <citation type="journal article" date="2016" name="Genome Announc.">
        <title>Complete genome sequence of Alkaliphilus metalliredigens strain QYMF, an alkaliphilic and metal-reducing bacterium isolated from borax-contaminated leachate ponds.</title>
        <authorList>
            <person name="Hwang C."/>
            <person name="Copeland A."/>
            <person name="Lucas S."/>
            <person name="Lapidus A."/>
            <person name="Barry K."/>
            <person name="Detter J.C."/>
            <person name="Glavina Del Rio T."/>
            <person name="Hammon N."/>
            <person name="Israni S."/>
            <person name="Dalin E."/>
            <person name="Tice H."/>
            <person name="Pitluck S."/>
            <person name="Chertkov O."/>
            <person name="Brettin T."/>
            <person name="Bruce D."/>
            <person name="Han C."/>
            <person name="Schmutz J."/>
            <person name="Larimer F."/>
            <person name="Land M.L."/>
            <person name="Hauser L."/>
            <person name="Kyrpides N."/>
            <person name="Mikhailova N."/>
            <person name="Ye Q."/>
            <person name="Zhou J."/>
            <person name="Richardson P."/>
            <person name="Fields M.W."/>
        </authorList>
    </citation>
    <scope>NUCLEOTIDE SEQUENCE [LARGE SCALE GENOMIC DNA]</scope>
    <source>
        <strain>QYMF</strain>
    </source>
</reference>
<sequence length="289" mass="32273">MGVGMQDIKRRIKSVNSTKQITKAMELVSSAKLRKARLKLEKTRPYFKVVEETINDIVSSTQGIRHDLITPREVKKTAYIVITADRGLSGGYNANVIKAAVNHLQEKERVSIIAIGKKGRGFFRKRGYDLDGEFTKISENPSFSDAQGIGKLGMELYKQELVDELYLVYTEFVSTITHKPRVVKLLPLEPQTGGEGAEKPKERDEFMSYEPSPEEVLDYLIPKYIESMLYGALVESSTSQQGATRVAMESATDNATDMIDGLQLQYNRARQASITQEIAEIVSGAEALK</sequence>
<comment type="function">
    <text evidence="1">Produces ATP from ADP in the presence of a proton gradient across the membrane. The gamma chain is believed to be important in regulating ATPase activity and the flow of protons through the CF(0) complex.</text>
</comment>
<comment type="subunit">
    <text evidence="1">F-type ATPases have 2 components, CF(1) - the catalytic core - and CF(0) - the membrane proton channel. CF(1) has five subunits: alpha(3), beta(3), gamma(1), delta(1), epsilon(1). CF(0) has three main subunits: a, b and c.</text>
</comment>
<comment type="subcellular location">
    <subcellularLocation>
        <location evidence="1">Cell membrane</location>
        <topology evidence="1">Peripheral membrane protein</topology>
    </subcellularLocation>
</comment>
<comment type="similarity">
    <text evidence="1">Belongs to the ATPase gamma chain family.</text>
</comment>